<name>Y602A_HAEIN</name>
<reference key="1">
    <citation type="journal article" date="1995" name="Science">
        <title>Whole-genome random sequencing and assembly of Haemophilus influenzae Rd.</title>
        <authorList>
            <person name="Fleischmann R.D."/>
            <person name="Adams M.D."/>
            <person name="White O."/>
            <person name="Clayton R.A."/>
            <person name="Kirkness E.F."/>
            <person name="Kerlavage A.R."/>
            <person name="Bult C.J."/>
            <person name="Tomb J.-F."/>
            <person name="Dougherty B.A."/>
            <person name="Merrick J.M."/>
            <person name="McKenney K."/>
            <person name="Sutton G.G."/>
            <person name="FitzHugh W."/>
            <person name="Fields C.A."/>
            <person name="Gocayne J.D."/>
            <person name="Scott J.D."/>
            <person name="Shirley R."/>
            <person name="Liu L.-I."/>
            <person name="Glodek A."/>
            <person name="Kelley J.M."/>
            <person name="Weidman J.F."/>
            <person name="Phillips C.A."/>
            <person name="Spriggs T."/>
            <person name="Hedblom E."/>
            <person name="Cotton M.D."/>
            <person name="Utterback T.R."/>
            <person name="Hanna M.C."/>
            <person name="Nguyen D.T."/>
            <person name="Saudek D.M."/>
            <person name="Brandon R.C."/>
            <person name="Fine L.D."/>
            <person name="Fritchman J.L."/>
            <person name="Fuhrmann J.L."/>
            <person name="Geoghagen N.S.M."/>
            <person name="Gnehm C.L."/>
            <person name="McDonald L.A."/>
            <person name="Small K.V."/>
            <person name="Fraser C.M."/>
            <person name="Smith H.O."/>
            <person name="Venter J.C."/>
        </authorList>
    </citation>
    <scope>NUCLEOTIDE SEQUENCE [LARGE SCALE GENOMIC DNA]</scope>
    <source>
        <strain>ATCC 51907 / DSM 11121 / KW20 / Rd</strain>
    </source>
</reference>
<reference key="2">
    <citation type="submission" date="1998-05" db="EMBL/GenBank/DDBJ databases">
        <authorList>
            <person name="White O."/>
            <person name="Clayton R.A."/>
            <person name="Kerlavage A.R."/>
            <person name="Fleischmann R.D."/>
            <person name="Peterson J."/>
            <person name="Hickey E."/>
            <person name="Dodson R."/>
            <person name="Gwinn M."/>
        </authorList>
    </citation>
    <scope>IDENTIFICATION</scope>
</reference>
<dbReference type="EMBL" id="L42023">
    <property type="protein sequence ID" value="AAC22263.1"/>
    <property type="molecule type" value="Genomic_DNA"/>
</dbReference>
<dbReference type="RefSeq" id="NP_438761.2">
    <property type="nucleotide sequence ID" value="NC_000907.1"/>
</dbReference>
<dbReference type="STRING" id="71421.HI_0602.1"/>
<dbReference type="EnsemblBacteria" id="AAC22263">
    <property type="protein sequence ID" value="AAC22263"/>
    <property type="gene ID" value="HI_0602.1"/>
</dbReference>
<dbReference type="KEGG" id="hin:HI_0602.1"/>
<dbReference type="PATRIC" id="fig|71421.8.peg.626"/>
<dbReference type="eggNOG" id="COG2959">
    <property type="taxonomic scope" value="Bacteria"/>
</dbReference>
<dbReference type="HOGENOM" id="CLU_1537955_0_0_6"/>
<dbReference type="OrthoDB" id="5739852at2"/>
<dbReference type="PhylomeDB" id="O86227"/>
<dbReference type="Proteomes" id="UP000000579">
    <property type="component" value="Chromosome"/>
</dbReference>
<dbReference type="InterPro" id="IPR007470">
    <property type="entry name" value="HemX"/>
</dbReference>
<dbReference type="PANTHER" id="PTHR38043">
    <property type="entry name" value="PROTEIN HEMX"/>
    <property type="match status" value="1"/>
</dbReference>
<dbReference type="PANTHER" id="PTHR38043:SF1">
    <property type="entry name" value="PROTEIN HEMX"/>
    <property type="match status" value="1"/>
</dbReference>
<dbReference type="Pfam" id="PF04375">
    <property type="entry name" value="HemX"/>
    <property type="match status" value="1"/>
</dbReference>
<gene>
    <name type="ordered locus">HI_0602.1</name>
</gene>
<sequence>MXVNFDETSKNNDKLSNNITDWQQNIEKSATSFLNHFIRISPKQNSNKKELLAPNQDIYLRENIRLRLQLAIMAVPRQQNELYKQSLEAVSSWVRSYFDTNAEVTQNFLKLVDGLTDTSIYVDVPEQLKSLTLLDKYLNRTALDVQKVEIEADKAIDTMPQVEAVKPTQSESQQ</sequence>
<proteinExistence type="predicted"/>
<evidence type="ECO:0000305" key="1"/>
<organism>
    <name type="scientific">Haemophilus influenzae (strain ATCC 51907 / DSM 11121 / KW20 / Rd)</name>
    <dbReference type="NCBI Taxonomy" id="71421"/>
    <lineage>
        <taxon>Bacteria</taxon>
        <taxon>Pseudomonadati</taxon>
        <taxon>Pseudomonadota</taxon>
        <taxon>Gammaproteobacteria</taxon>
        <taxon>Pasteurellales</taxon>
        <taxon>Pasteurellaceae</taxon>
        <taxon>Haemophilus</taxon>
    </lineage>
</organism>
<comment type="similarity">
    <text evidence="1">To E.coli HemX C-terminal region.</text>
</comment>
<keyword id="KW-1185">Reference proteome</keyword>
<accession>O86227</accession>
<feature type="chain" id="PRO_0000135258" description="Uncharacterized protein HI_0602.1">
    <location>
        <begin position="1"/>
        <end position="174"/>
    </location>
</feature>
<protein>
    <recommendedName>
        <fullName>Uncharacterized protein HI_0602.1</fullName>
    </recommendedName>
</protein>